<name>ASXL3_MOUSE</name>
<gene>
    <name type="primary">Asxl3</name>
</gene>
<protein>
    <recommendedName>
        <fullName>Putative Polycomb group protein ASXL3</fullName>
    </recommendedName>
    <alternativeName>
        <fullName>Additional sex combs-like protein 3</fullName>
    </alternativeName>
</protein>
<evidence type="ECO:0000250" key="1"/>
<evidence type="ECO:0000250" key="2">
    <source>
        <dbReference type="UniProtKB" id="Q9C0F0"/>
    </source>
</evidence>
<evidence type="ECO:0000255" key="3">
    <source>
        <dbReference type="PROSITE-ProRule" id="PRU01261"/>
    </source>
</evidence>
<evidence type="ECO:0000255" key="4">
    <source>
        <dbReference type="PROSITE-ProRule" id="PRU01264"/>
    </source>
</evidence>
<evidence type="ECO:0000256" key="5">
    <source>
        <dbReference type="SAM" id="MobiDB-lite"/>
    </source>
</evidence>
<evidence type="ECO:0000269" key="6">
    <source>
    </source>
</evidence>
<evidence type="ECO:0000303" key="7">
    <source>
    </source>
</evidence>
<evidence type="ECO:0000305" key="8"/>
<keyword id="KW-0025">Alternative splicing</keyword>
<keyword id="KW-0479">Metal-binding</keyword>
<keyword id="KW-0539">Nucleus</keyword>
<keyword id="KW-1185">Reference proteome</keyword>
<keyword id="KW-0678">Repressor</keyword>
<keyword id="KW-0804">Transcription</keyword>
<keyword id="KW-0805">Transcription regulation</keyword>
<keyword id="KW-0833">Ubl conjugation pathway</keyword>
<keyword id="KW-0862">Zinc</keyword>
<keyword id="KW-0863">Zinc-finger</keyword>
<organism>
    <name type="scientific">Mus musculus</name>
    <name type="common">Mouse</name>
    <dbReference type="NCBI Taxonomy" id="10090"/>
    <lineage>
        <taxon>Eukaryota</taxon>
        <taxon>Metazoa</taxon>
        <taxon>Chordata</taxon>
        <taxon>Craniata</taxon>
        <taxon>Vertebrata</taxon>
        <taxon>Euteleostomi</taxon>
        <taxon>Mammalia</taxon>
        <taxon>Eutheria</taxon>
        <taxon>Euarchontoglires</taxon>
        <taxon>Glires</taxon>
        <taxon>Rodentia</taxon>
        <taxon>Myomorpha</taxon>
        <taxon>Muroidea</taxon>
        <taxon>Muridae</taxon>
        <taxon>Murinae</taxon>
        <taxon>Mus</taxon>
        <taxon>Mus</taxon>
    </lineage>
</organism>
<comment type="function">
    <text evidence="1 2 6">Putative Polycomb group (PcG) protein. PcG proteins act by forming multiprotein complexes, which are required to maintain the transcriptionally repressive state of homeotic genes throughout development. PcG proteins are not required to initiate repression, but to maintain it during later stages of development. They probably act via methylation of histones, rendering chromatin heritably changed in its expressibility (By similarity). Non-catalytic component of the PR-DUB complex, a complex that specifically mediates deubiquitination of histone H2A monoubiquitinated at 'Lys-119' (H2AK119ub1) (By similarity). The PR-DUB complex is an epigenetic regulator of gene expression and acts as a transcriptional coactivator, affecting genes involved in development, cell communication, signaling, cell proliferation and cell viability (By similarity). ASXL1, ASXL2 and ASXL3 function redundantly in the PR-DUB complex and are essential for chromatin recruitment and transcriptional activation of associated genes (PubMed:32747411).</text>
</comment>
<comment type="subunit">
    <text evidence="2">Core component of the polycomb repressive deubiquitinase (PR-DUB) complex, at least composed of BAP1, one of ASXL1, ASXL2 or (probably) ASXL3, and one of MBD5 or MBD6. Distinct combinations of ASXL and MBD proteins may preferentially bind specific histone modification marks. The PR-DUB core associates with a number of accessory proteins, including FOXK1, FOXK2, KDM1B, HCFC1 and OGT; KDM1B specifically associates with ASXL2 PR-DUB complexes. Interacts (via PHD domain) with MBD5 and MBD6 (via MBD domain); the interaction is probably direct and mediates association of MBD proteins with the PR-DUB core.</text>
</comment>
<comment type="subcellular location">
    <subcellularLocation>
        <location evidence="8">Nucleus</location>
    </subcellularLocation>
</comment>
<comment type="alternative products">
    <event type="alternative splicing"/>
    <isoform>
        <id>Q8C4A5-1</id>
        <name>1</name>
        <sequence type="displayed"/>
    </isoform>
    <isoform>
        <id>Q8C4A5-2</id>
        <name>2</name>
        <sequence type="described" ref="VSP_031720"/>
    </isoform>
</comment>
<comment type="similarity">
    <text evidence="8">Belongs to the Asx family.</text>
</comment>
<proteinExistence type="evidence at transcript level"/>
<feature type="chain" id="PRO_0000320671" description="Putative Polycomb group protein ASXL3">
    <location>
        <begin position="1"/>
        <end position="2259"/>
    </location>
</feature>
<feature type="domain" description="HTH HARE-type" evidence="3">
    <location>
        <begin position="10"/>
        <end position="83"/>
    </location>
</feature>
<feature type="domain" description="DEUBAD" evidence="4">
    <location>
        <begin position="253"/>
        <end position="362"/>
    </location>
</feature>
<feature type="zinc finger region" description="PHD-type; atypical">
    <location>
        <begin position="2221"/>
        <end position="2258"/>
    </location>
</feature>
<feature type="region of interest" description="Disordered" evidence="5">
    <location>
        <begin position="181"/>
        <end position="230"/>
    </location>
</feature>
<feature type="region of interest" description="Disordered" evidence="5">
    <location>
        <begin position="364"/>
        <end position="399"/>
    </location>
</feature>
<feature type="region of interest" description="Disordered" evidence="5">
    <location>
        <begin position="607"/>
        <end position="643"/>
    </location>
</feature>
<feature type="region of interest" description="Disordered" evidence="5">
    <location>
        <begin position="703"/>
        <end position="810"/>
    </location>
</feature>
<feature type="region of interest" description="Disordered" evidence="5">
    <location>
        <begin position="857"/>
        <end position="1012"/>
    </location>
</feature>
<feature type="region of interest" description="Disordered" evidence="5">
    <location>
        <begin position="1025"/>
        <end position="1049"/>
    </location>
</feature>
<feature type="region of interest" description="Disordered" evidence="5">
    <location>
        <begin position="1126"/>
        <end position="1150"/>
    </location>
</feature>
<feature type="region of interest" description="Disordered" evidence="5">
    <location>
        <begin position="1433"/>
        <end position="1462"/>
    </location>
</feature>
<feature type="region of interest" description="Disordered" evidence="5">
    <location>
        <begin position="1614"/>
        <end position="1643"/>
    </location>
</feature>
<feature type="region of interest" description="Disordered" evidence="5">
    <location>
        <begin position="1687"/>
        <end position="1719"/>
    </location>
</feature>
<feature type="region of interest" description="Disordered" evidence="5">
    <location>
        <begin position="1993"/>
        <end position="2075"/>
    </location>
</feature>
<feature type="compositionally biased region" description="Basic and acidic residues" evidence="5">
    <location>
        <begin position="202"/>
        <end position="215"/>
    </location>
</feature>
<feature type="compositionally biased region" description="Polar residues" evidence="5">
    <location>
        <begin position="218"/>
        <end position="227"/>
    </location>
</feature>
<feature type="compositionally biased region" description="Polar residues" evidence="5">
    <location>
        <begin position="607"/>
        <end position="617"/>
    </location>
</feature>
<feature type="compositionally biased region" description="Polar residues" evidence="5">
    <location>
        <begin position="630"/>
        <end position="643"/>
    </location>
</feature>
<feature type="compositionally biased region" description="Polar residues" evidence="5">
    <location>
        <begin position="703"/>
        <end position="717"/>
    </location>
</feature>
<feature type="compositionally biased region" description="Low complexity" evidence="5">
    <location>
        <begin position="722"/>
        <end position="741"/>
    </location>
</feature>
<feature type="compositionally biased region" description="Polar residues" evidence="5">
    <location>
        <begin position="770"/>
        <end position="781"/>
    </location>
</feature>
<feature type="compositionally biased region" description="Polar residues" evidence="5">
    <location>
        <begin position="926"/>
        <end position="945"/>
    </location>
</feature>
<feature type="compositionally biased region" description="Basic and acidic residues" evidence="5">
    <location>
        <begin position="949"/>
        <end position="985"/>
    </location>
</feature>
<feature type="compositionally biased region" description="Basic and acidic residues" evidence="5">
    <location>
        <begin position="995"/>
        <end position="1006"/>
    </location>
</feature>
<feature type="compositionally biased region" description="Low complexity" evidence="5">
    <location>
        <begin position="1034"/>
        <end position="1043"/>
    </location>
</feature>
<feature type="compositionally biased region" description="Polar residues" evidence="5">
    <location>
        <begin position="1437"/>
        <end position="1448"/>
    </location>
</feature>
<feature type="compositionally biased region" description="Polar residues" evidence="5">
    <location>
        <begin position="1699"/>
        <end position="1719"/>
    </location>
</feature>
<feature type="compositionally biased region" description="Pro residues" evidence="5">
    <location>
        <begin position="2023"/>
        <end position="2055"/>
    </location>
</feature>
<feature type="splice variant" id="VSP_031720" description="In isoform 2." evidence="7">
    <location>
        <begin position="1"/>
        <end position="55"/>
    </location>
</feature>
<accession>Q8C4A5</accession>
<accession>Q8C380</accession>
<sequence length="2259" mass="243673">MKDKRKKKDRTWAEAARLALEKHPNSPMTAKQILEVIQKEGLKETGTSPLACLNAMLHTNTRVGDGTFFKIPGKSGLYALRKEESSCPVDGTLDLVVDPDLDGAEMAEASANGEENRVCTKQVTDEVSSTRDCSLTNTAVQSKLVSSFQQHTKKALKQALRQQQKRRNGVSMMVNKTVPRVVLTPLKVSDEQSDSPSGSESKNGEADSSDKEMKHGQKSPTGKQTSQHLKRLKKSGLGHLKWTKAEDIDIETPGSILVNTNLRALINKHTFASFPQHFQQYLLLLLPEVDRQMGSDGILRLSTSALNNEFFAYAAQGWKQRLAEGEFTPEMQLRIRQEIEKEKKTEPWKEKFFERFYGERSGMSREESIKLTSGPNHEGAEGSSSHGDSGIPGPSAQNALEEQQPKILKSSASLEPDFCTTVCPMLEVPVKDVMTESETEDIFIPEESVIQEEVAEEVETSIYECQDEHLKTIPAFSEESESPATPCEEPQVAAPEDSLESCVVMNDILHTLPHIEVKIVEKLECPQEEMSVVIDQLEICDSLLPCPSSVTHILDVEQKEQETTIETSAMALREGPSSLESQLPNEGIAVDMELQSDPEEQLSENACISETSFSSESPEGACASLPSPGGETQSTSEESCTPASLETTFCSEVSSTENTDKYNQRNPTGESLHASLVSEVSPLATSPEISEASLMSNLPLTSEASPVSNLPLTSEASPMSDLPPTSETSSESSMPLTSETPFVSSLPIPAETSPISNSSVNERMVHQQRKSPSGSEEANSPQKEEPSIPTKPLGESLVSHPKPLSTIPEPINMSSAMVPEALPPEGLHSQTLSQEPCNAHVEMEKLYASSIPELPSSEMTKVKNHSVLQRPEKKGLSAPLEVPVFSEETETKGIELPPAKLQDKQYAPSVDKATFLEGSRNKIHKQSSTLNRLETSHTSKVSEPSKSPDGIRNDNRESEISKRKTVEHSFGICKEKRARIEDDQSARSLASSSPPEKEQPPREEPRVPPLKIQLSKIGPPFIIKSQPVSKAESRASTSTSVSSGRNTGARTLADIKARAQQARAQREAAAAAAVAAAASIVSGAMGSPGEGGKARTLAHIKEQTKAKLFAKHQSRAHLFQTSKETRLPSVSTKEDSLNMEASPTPETKMEGSTGVIIINPNCRSPSSKPTHIREITTVLQQPLNPPQIPETATDLSVHSSDDNIPVSHLTEKIVSSTSSENSSVPILHNKSPINPIPMSVCSTAMSGAIKEHPFVSPVDKSSVLMSVDSANSTISACNISMLKSIQGSDAPCIALVPKCINRTPIPAAPEGTGQSNSMDGKALLVPSSKAANVISNQYTSVPAPTIASNLPNHLCTSSVLIPPTGINNRFVSEKIAMPGSEEQAAVSIGATMRTALSCGDSVAVTDSLVPRSPIAMFAGNMLTANSYNCPPKLSGENLDNNSGPLNRTDNSEKPQQPAGGFVPATINRSIPCKVIVDHSTTLTSNLSLTVSIESGDSSLDSQTRSVRTDVSIQPVACPQVSVISRPEQATSEGLDHGSVFIAAPTAKQDCKTLQATCTSLRELPLTLPDKLNEVTVPTHGFAEQARNSSTFKKETDTACSNQYNPGNRICWSEDPMRNTAPPVVSHSSSSKQKEHPEQTGLKAVKTEHVSYAHVSDLHPRNLITNVSLPVKPEPHEVDKGFRMDTEDFPGPERPPPVTEVTSSASVQPTQTMKPSTTSPVEEAISLAPDTLKRIPSASSSSCRLSSVEANNPLVTQLLQGNLPLEKVLPQPRLGAKLEINRLPLPLQTTSVGKTGLERNMVEMPSSSPNPDGKGYLAGTLAPVQMRKRENHPKKRAARTVGDHAQVKCEPGKMVMEPDVKAVPCVISPSMSQLGHNQPFKQERLNKPSMANRIMPSPEVKQQKRLLPACSFQPSLFHVNKNEGFHADTGTSHRQQFYQMPMAARGPLPTPALLQNSPKTPVGCNAFAFNRHLEQKALGDVNLPTAPHQLRLANMLSPNMPIKEGEDGGGTTHTMPSKAVVHAPLPPPPPPPPPPPPPLALPPPPPPPPPLPPPLPTVEVPSDQKQPPVNMETTKRLSWPQSTGICSNIKSEPLSFEESLSSSCELGMKQVPYDQNEVKEQLKAFALKNADFSSYLLSEPQKPFTQLAAQKLPVPQQQPLCGSYPTIHFGSTNFKRAASAIEKSIGILGSGSNPATSTGLTGQNTQMPVQNFADNSNADELELKCSCRLKAMIVCKGCGAFCHDDCIGPSKLCVACLVVR</sequence>
<dbReference type="EMBL" id="AC103351">
    <property type="status" value="NOT_ANNOTATED_CDS"/>
    <property type="molecule type" value="Genomic_DNA"/>
</dbReference>
<dbReference type="EMBL" id="AC163208">
    <property type="status" value="NOT_ANNOTATED_CDS"/>
    <property type="molecule type" value="Genomic_DNA"/>
</dbReference>
<dbReference type="EMBL" id="AK082659">
    <property type="protein sequence ID" value="BAC38564.2"/>
    <property type="molecule type" value="mRNA"/>
</dbReference>
<dbReference type="EMBL" id="AK086668">
    <property type="protein sequence ID" value="BAC39715.1"/>
    <property type="molecule type" value="mRNA"/>
</dbReference>
<dbReference type="CCDS" id="CCDS50234.1">
    <molecule id="Q8C4A5-2"/>
</dbReference>
<dbReference type="RefSeq" id="NP_001161249.1">
    <molecule id="Q8C4A5-2"/>
    <property type="nucleotide sequence ID" value="NM_001167777.1"/>
</dbReference>
<dbReference type="RefSeq" id="XP_011245170.1">
    <molecule id="Q8C4A5-2"/>
    <property type="nucleotide sequence ID" value="XM_011246868.2"/>
</dbReference>
<dbReference type="RefSeq" id="XP_017173342.1">
    <property type="nucleotide sequence ID" value="XM_017317853.1"/>
</dbReference>
<dbReference type="RefSeq" id="XP_030106229.1">
    <molecule id="Q8C4A5-2"/>
    <property type="nucleotide sequence ID" value="XM_030250369.1"/>
</dbReference>
<dbReference type="RefSeq" id="XP_030106230.1">
    <molecule id="Q8C4A5-2"/>
    <property type="nucleotide sequence ID" value="XM_030250370.2"/>
</dbReference>
<dbReference type="RefSeq" id="XP_030106231.1">
    <molecule id="Q8C4A5-2"/>
    <property type="nucleotide sequence ID" value="XM_030250371.2"/>
</dbReference>
<dbReference type="RefSeq" id="XP_030106232.1">
    <molecule id="Q8C4A5-2"/>
    <property type="nucleotide sequence ID" value="XM_030250372.2"/>
</dbReference>
<dbReference type="SMR" id="Q8C4A5"/>
<dbReference type="BioGRID" id="229278">
    <property type="interactions" value="2"/>
</dbReference>
<dbReference type="FunCoup" id="Q8C4A5">
    <property type="interactions" value="198"/>
</dbReference>
<dbReference type="STRING" id="10090.ENSMUSP00000095260"/>
<dbReference type="GlyGen" id="Q8C4A5">
    <property type="glycosylation" value="2 sites"/>
</dbReference>
<dbReference type="iPTMnet" id="Q8C4A5"/>
<dbReference type="PhosphoSitePlus" id="Q8C4A5"/>
<dbReference type="PaxDb" id="10090-ENSMUSP00000095260"/>
<dbReference type="ProteomicsDB" id="281863">
    <molecule id="Q8C4A5-1"/>
</dbReference>
<dbReference type="ProteomicsDB" id="281864">
    <molecule id="Q8C4A5-2"/>
</dbReference>
<dbReference type="Antibodypedia" id="82041">
    <property type="antibodies" value="8 antibodies from 2 providers"/>
</dbReference>
<dbReference type="Ensembl" id="ENSMUST00000120223.8">
    <molecule id="Q8C4A5-2"/>
    <property type="protein sequence ID" value="ENSMUSP00000112793.2"/>
    <property type="gene ID" value="ENSMUSG00000045215.19"/>
</dbReference>
<dbReference type="GeneID" id="211961"/>
<dbReference type="KEGG" id="mmu:211961"/>
<dbReference type="UCSC" id="uc008efm.2">
    <molecule id="Q8C4A5-1"/>
    <property type="organism name" value="mouse"/>
</dbReference>
<dbReference type="AGR" id="MGI:2685175"/>
<dbReference type="CTD" id="80816"/>
<dbReference type="MGI" id="MGI:2685175">
    <property type="gene designation" value="Asxl3"/>
</dbReference>
<dbReference type="VEuPathDB" id="HostDB:ENSMUSG00000045215"/>
<dbReference type="eggNOG" id="ENOG502QWPH">
    <property type="taxonomic scope" value="Eukaryota"/>
</dbReference>
<dbReference type="GeneTree" id="ENSGT00520000055578"/>
<dbReference type="HOGENOM" id="CLU_001823_0_0_1"/>
<dbReference type="InParanoid" id="Q8C4A5"/>
<dbReference type="OMA" id="IQPMACP"/>
<dbReference type="TreeFam" id="TF328464"/>
<dbReference type="BioGRID-ORCS" id="211961">
    <property type="hits" value="2 hits in 83 CRISPR screens"/>
</dbReference>
<dbReference type="PRO" id="PR:Q8C4A5"/>
<dbReference type="Proteomes" id="UP000000589">
    <property type="component" value="Chromosome 18"/>
</dbReference>
<dbReference type="RNAct" id="Q8C4A5">
    <property type="molecule type" value="protein"/>
</dbReference>
<dbReference type="Bgee" id="ENSMUSG00000045215">
    <property type="expression patterns" value="Expressed in superior cervical ganglion and 157 other cell types or tissues"/>
</dbReference>
<dbReference type="ExpressionAtlas" id="Q8C4A5">
    <property type="expression patterns" value="baseline and differential"/>
</dbReference>
<dbReference type="GO" id="GO:0005634">
    <property type="term" value="C:nucleus"/>
    <property type="evidence" value="ECO:0007669"/>
    <property type="project" value="UniProtKB-SubCell"/>
</dbReference>
<dbReference type="GO" id="GO:0003677">
    <property type="term" value="F:DNA binding"/>
    <property type="evidence" value="ECO:0007669"/>
    <property type="project" value="InterPro"/>
</dbReference>
<dbReference type="GO" id="GO:0008270">
    <property type="term" value="F:zinc ion binding"/>
    <property type="evidence" value="ECO:0007669"/>
    <property type="project" value="UniProtKB-KW"/>
</dbReference>
<dbReference type="GO" id="GO:0006355">
    <property type="term" value="P:regulation of DNA-templated transcription"/>
    <property type="evidence" value="ECO:0007669"/>
    <property type="project" value="InterPro"/>
</dbReference>
<dbReference type="InterPro" id="IPR026905">
    <property type="entry name" value="ASX-like_PHD"/>
</dbReference>
<dbReference type="InterPro" id="IPR024811">
    <property type="entry name" value="ASX/ASX-like"/>
</dbReference>
<dbReference type="InterPro" id="IPR028020">
    <property type="entry name" value="ASX_DEUBAD_dom"/>
</dbReference>
<dbReference type="InterPro" id="IPR007759">
    <property type="entry name" value="Asxl_HARE-HTH"/>
</dbReference>
<dbReference type="InterPro" id="IPR044867">
    <property type="entry name" value="DEUBAD_dom"/>
</dbReference>
<dbReference type="PANTHER" id="PTHR13578">
    <property type="entry name" value="ADDITIONAL SEX COMBS LIKE PROTEIN ASXL"/>
    <property type="match status" value="1"/>
</dbReference>
<dbReference type="PANTHER" id="PTHR13578:SF18">
    <property type="entry name" value="POLYCOMB GROUP PROTEIN ASXL3-RELATED"/>
    <property type="match status" value="1"/>
</dbReference>
<dbReference type="Pfam" id="PF13919">
    <property type="entry name" value="ASXH"/>
    <property type="match status" value="1"/>
</dbReference>
<dbReference type="Pfam" id="PF05066">
    <property type="entry name" value="HARE-HTH"/>
    <property type="match status" value="1"/>
</dbReference>
<dbReference type="Pfam" id="PF13922">
    <property type="entry name" value="PHD_3"/>
    <property type="match status" value="1"/>
</dbReference>
<dbReference type="PROSITE" id="PS51916">
    <property type="entry name" value="DEUBAD"/>
    <property type="match status" value="1"/>
</dbReference>
<dbReference type="PROSITE" id="PS51913">
    <property type="entry name" value="HTH_HARE"/>
    <property type="match status" value="1"/>
</dbReference>
<reference key="1">
    <citation type="journal article" date="2009" name="PLoS Biol.">
        <title>Lineage-specific biology revealed by a finished genome assembly of the mouse.</title>
        <authorList>
            <person name="Church D.M."/>
            <person name="Goodstadt L."/>
            <person name="Hillier L.W."/>
            <person name="Zody M.C."/>
            <person name="Goldstein S."/>
            <person name="She X."/>
            <person name="Bult C.J."/>
            <person name="Agarwala R."/>
            <person name="Cherry J.L."/>
            <person name="DiCuccio M."/>
            <person name="Hlavina W."/>
            <person name="Kapustin Y."/>
            <person name="Meric P."/>
            <person name="Maglott D."/>
            <person name="Birtle Z."/>
            <person name="Marques A.C."/>
            <person name="Graves T."/>
            <person name="Zhou S."/>
            <person name="Teague B."/>
            <person name="Potamousis K."/>
            <person name="Churas C."/>
            <person name="Place M."/>
            <person name="Herschleb J."/>
            <person name="Runnheim R."/>
            <person name="Forrest D."/>
            <person name="Amos-Landgraf J."/>
            <person name="Schwartz D.C."/>
            <person name="Cheng Z."/>
            <person name="Lindblad-Toh K."/>
            <person name="Eichler E.E."/>
            <person name="Ponting C.P."/>
        </authorList>
    </citation>
    <scope>NUCLEOTIDE SEQUENCE [LARGE SCALE GENOMIC DNA]</scope>
    <source>
        <strain>C57BL/6J</strain>
    </source>
</reference>
<reference key="2">
    <citation type="journal article" date="2005" name="Science">
        <title>The transcriptional landscape of the mammalian genome.</title>
        <authorList>
            <person name="Carninci P."/>
            <person name="Kasukawa T."/>
            <person name="Katayama S."/>
            <person name="Gough J."/>
            <person name="Frith M.C."/>
            <person name="Maeda N."/>
            <person name="Oyama R."/>
            <person name="Ravasi T."/>
            <person name="Lenhard B."/>
            <person name="Wells C."/>
            <person name="Kodzius R."/>
            <person name="Shimokawa K."/>
            <person name="Bajic V.B."/>
            <person name="Brenner S.E."/>
            <person name="Batalov S."/>
            <person name="Forrest A.R."/>
            <person name="Zavolan M."/>
            <person name="Davis M.J."/>
            <person name="Wilming L.G."/>
            <person name="Aidinis V."/>
            <person name="Allen J.E."/>
            <person name="Ambesi-Impiombato A."/>
            <person name="Apweiler R."/>
            <person name="Aturaliya R.N."/>
            <person name="Bailey T.L."/>
            <person name="Bansal M."/>
            <person name="Baxter L."/>
            <person name="Beisel K.W."/>
            <person name="Bersano T."/>
            <person name="Bono H."/>
            <person name="Chalk A.M."/>
            <person name="Chiu K.P."/>
            <person name="Choudhary V."/>
            <person name="Christoffels A."/>
            <person name="Clutterbuck D.R."/>
            <person name="Crowe M.L."/>
            <person name="Dalla E."/>
            <person name="Dalrymple B.P."/>
            <person name="de Bono B."/>
            <person name="Della Gatta G."/>
            <person name="di Bernardo D."/>
            <person name="Down T."/>
            <person name="Engstrom P."/>
            <person name="Fagiolini M."/>
            <person name="Faulkner G."/>
            <person name="Fletcher C.F."/>
            <person name="Fukushima T."/>
            <person name="Furuno M."/>
            <person name="Futaki S."/>
            <person name="Gariboldi M."/>
            <person name="Georgii-Hemming P."/>
            <person name="Gingeras T.R."/>
            <person name="Gojobori T."/>
            <person name="Green R.E."/>
            <person name="Gustincich S."/>
            <person name="Harbers M."/>
            <person name="Hayashi Y."/>
            <person name="Hensch T.K."/>
            <person name="Hirokawa N."/>
            <person name="Hill D."/>
            <person name="Huminiecki L."/>
            <person name="Iacono M."/>
            <person name="Ikeo K."/>
            <person name="Iwama A."/>
            <person name="Ishikawa T."/>
            <person name="Jakt M."/>
            <person name="Kanapin A."/>
            <person name="Katoh M."/>
            <person name="Kawasawa Y."/>
            <person name="Kelso J."/>
            <person name="Kitamura H."/>
            <person name="Kitano H."/>
            <person name="Kollias G."/>
            <person name="Krishnan S.P."/>
            <person name="Kruger A."/>
            <person name="Kummerfeld S.K."/>
            <person name="Kurochkin I.V."/>
            <person name="Lareau L.F."/>
            <person name="Lazarevic D."/>
            <person name="Lipovich L."/>
            <person name="Liu J."/>
            <person name="Liuni S."/>
            <person name="McWilliam S."/>
            <person name="Madan Babu M."/>
            <person name="Madera M."/>
            <person name="Marchionni L."/>
            <person name="Matsuda H."/>
            <person name="Matsuzawa S."/>
            <person name="Miki H."/>
            <person name="Mignone F."/>
            <person name="Miyake S."/>
            <person name="Morris K."/>
            <person name="Mottagui-Tabar S."/>
            <person name="Mulder N."/>
            <person name="Nakano N."/>
            <person name="Nakauchi H."/>
            <person name="Ng P."/>
            <person name="Nilsson R."/>
            <person name="Nishiguchi S."/>
            <person name="Nishikawa S."/>
            <person name="Nori F."/>
            <person name="Ohara O."/>
            <person name="Okazaki Y."/>
            <person name="Orlando V."/>
            <person name="Pang K.C."/>
            <person name="Pavan W.J."/>
            <person name="Pavesi G."/>
            <person name="Pesole G."/>
            <person name="Petrovsky N."/>
            <person name="Piazza S."/>
            <person name="Reed J."/>
            <person name="Reid J.F."/>
            <person name="Ring B.Z."/>
            <person name="Ringwald M."/>
            <person name="Rost B."/>
            <person name="Ruan Y."/>
            <person name="Salzberg S.L."/>
            <person name="Sandelin A."/>
            <person name="Schneider C."/>
            <person name="Schoenbach C."/>
            <person name="Sekiguchi K."/>
            <person name="Semple C.A."/>
            <person name="Seno S."/>
            <person name="Sessa L."/>
            <person name="Sheng Y."/>
            <person name="Shibata Y."/>
            <person name="Shimada H."/>
            <person name="Shimada K."/>
            <person name="Silva D."/>
            <person name="Sinclair B."/>
            <person name="Sperling S."/>
            <person name="Stupka E."/>
            <person name="Sugiura K."/>
            <person name="Sultana R."/>
            <person name="Takenaka Y."/>
            <person name="Taki K."/>
            <person name="Tammoja K."/>
            <person name="Tan S.L."/>
            <person name="Tang S."/>
            <person name="Taylor M.S."/>
            <person name="Tegner J."/>
            <person name="Teichmann S.A."/>
            <person name="Ueda H.R."/>
            <person name="van Nimwegen E."/>
            <person name="Verardo R."/>
            <person name="Wei C.L."/>
            <person name="Yagi K."/>
            <person name="Yamanishi H."/>
            <person name="Zabarovsky E."/>
            <person name="Zhu S."/>
            <person name="Zimmer A."/>
            <person name="Hide W."/>
            <person name="Bult C."/>
            <person name="Grimmond S.M."/>
            <person name="Teasdale R.D."/>
            <person name="Liu E.T."/>
            <person name="Brusic V."/>
            <person name="Quackenbush J."/>
            <person name="Wahlestedt C."/>
            <person name="Mattick J.S."/>
            <person name="Hume D.A."/>
            <person name="Kai C."/>
            <person name="Sasaki D."/>
            <person name="Tomaru Y."/>
            <person name="Fukuda S."/>
            <person name="Kanamori-Katayama M."/>
            <person name="Suzuki M."/>
            <person name="Aoki J."/>
            <person name="Arakawa T."/>
            <person name="Iida J."/>
            <person name="Imamura K."/>
            <person name="Itoh M."/>
            <person name="Kato T."/>
            <person name="Kawaji H."/>
            <person name="Kawagashira N."/>
            <person name="Kawashima T."/>
            <person name="Kojima M."/>
            <person name="Kondo S."/>
            <person name="Konno H."/>
            <person name="Nakano K."/>
            <person name="Ninomiya N."/>
            <person name="Nishio T."/>
            <person name="Okada M."/>
            <person name="Plessy C."/>
            <person name="Shibata K."/>
            <person name="Shiraki T."/>
            <person name="Suzuki S."/>
            <person name="Tagami M."/>
            <person name="Waki K."/>
            <person name="Watahiki A."/>
            <person name="Okamura-Oho Y."/>
            <person name="Suzuki H."/>
            <person name="Kawai J."/>
            <person name="Hayashizaki Y."/>
        </authorList>
    </citation>
    <scope>NUCLEOTIDE SEQUENCE [LARGE SCALE MRNA] OF 1-961 AND 2090-2259 (ISOFORM 2)</scope>
    <source>
        <strain>C57BL/6J</strain>
        <tissue>Cerebellum</tissue>
        <tissue>Head</tissue>
    </source>
</reference>
<reference key="3">
    <citation type="journal article" date="2006" name="Gene">
        <title>Characterization of Asxl1, a murine homolog of Additional sex combs, and analysis of the Asx-like gene family.</title>
        <authorList>
            <person name="Fisher C.L."/>
            <person name="Randazzo F."/>
            <person name="Humphries R.K."/>
            <person name="Brock H.W."/>
        </authorList>
    </citation>
    <scope>IDENTIFICATION</scope>
</reference>
<reference key="4">
    <citation type="journal article" date="2020" name="Genome Res.">
        <title>PR-DUB maintains the expression of critical genes through FOXK1/2- and ASXL1/2/3-dependent recruitment to chromatin and H2AK119ub1 deubiquitination.</title>
        <authorList>
            <person name="Kolovos P."/>
            <person name="Nishimura K."/>
            <person name="Sankar A."/>
            <person name="Sidoli S."/>
            <person name="Cloos P.A."/>
            <person name="Helin K."/>
            <person name="Christensen J."/>
        </authorList>
    </citation>
    <scope>FUNCTION</scope>
</reference>